<gene>
    <name type="primary">Prrc2a</name>
    <name type="synonym">Bat2</name>
</gene>
<organism>
    <name type="scientific">Mus musculus</name>
    <name type="common">Mouse</name>
    <dbReference type="NCBI Taxonomy" id="10090"/>
    <lineage>
        <taxon>Eukaryota</taxon>
        <taxon>Metazoa</taxon>
        <taxon>Chordata</taxon>
        <taxon>Craniata</taxon>
        <taxon>Vertebrata</taxon>
        <taxon>Euteleostomi</taxon>
        <taxon>Mammalia</taxon>
        <taxon>Eutheria</taxon>
        <taxon>Euarchontoglires</taxon>
        <taxon>Glires</taxon>
        <taxon>Rodentia</taxon>
        <taxon>Myomorpha</taxon>
        <taxon>Muroidea</taxon>
        <taxon>Muridae</taxon>
        <taxon>Murinae</taxon>
        <taxon>Mus</taxon>
        <taxon>Mus</taxon>
    </lineage>
</organism>
<reference key="1">
    <citation type="journal article" date="2003" name="Genome Res.">
        <title>Analysis of the gene-dense major histocompatibility complex class III region and its comparison to mouse.</title>
        <authorList>
            <person name="Xie T."/>
            <person name="Rowen L."/>
            <person name="Aguado B."/>
            <person name="Ahearn M.E."/>
            <person name="Madan A."/>
            <person name="Qin S."/>
            <person name="Campbell R.D."/>
            <person name="Hood L."/>
        </authorList>
    </citation>
    <scope>NUCLEOTIDE SEQUENCE [LARGE SCALE GENOMIC DNA]</scope>
    <source>
        <strain>129</strain>
    </source>
</reference>
<reference key="2">
    <citation type="journal article" date="2004" name="Genome Res.">
        <title>The status, quality, and expansion of the NIH full-length cDNA project: the Mammalian Gene Collection (MGC).</title>
        <authorList>
            <consortium name="The MGC Project Team"/>
        </authorList>
    </citation>
    <scope>NUCLEOTIDE SEQUENCE [LARGE SCALE MRNA]</scope>
    <source>
        <tissue>Eye</tissue>
        <tissue>Mammary gland</tissue>
    </source>
</reference>
<reference key="3">
    <citation type="submission" date="2009-01" db="UniProtKB">
        <authorList>
            <person name="Lubec G."/>
            <person name="Sunyer B."/>
            <person name="Chen W.-Q."/>
        </authorList>
    </citation>
    <scope>PROTEIN SEQUENCE OF 82-89</scope>
    <scope>IDENTIFICATION BY MASS SPECTROMETRY</scope>
    <source>
        <strain>OF1</strain>
        <tissue>Hippocampus</tissue>
    </source>
</reference>
<reference key="4">
    <citation type="journal article" date="2007" name="Proc. Natl. Acad. Sci. U.S.A.">
        <title>Large-scale phosphorylation analysis of mouse liver.</title>
        <authorList>
            <person name="Villen J."/>
            <person name="Beausoleil S.A."/>
            <person name="Gerber S.A."/>
            <person name="Gygi S.P."/>
        </authorList>
    </citation>
    <scope>PHOSPHORYLATION [LARGE SCALE ANALYSIS] AT THR-995; SER-1087 AND SER-1090</scope>
    <scope>IDENTIFICATION BY MASS SPECTROMETRY [LARGE SCALE ANALYSIS]</scope>
    <source>
        <tissue>Liver</tissue>
    </source>
</reference>
<reference key="5">
    <citation type="journal article" date="2009" name="Immunity">
        <title>The phagosomal proteome in interferon-gamma-activated macrophages.</title>
        <authorList>
            <person name="Trost M."/>
            <person name="English L."/>
            <person name="Lemieux S."/>
            <person name="Courcelles M."/>
            <person name="Desjardins M."/>
            <person name="Thibault P."/>
        </authorList>
    </citation>
    <scope>PHOSPHORYLATION [LARGE SCALE ANALYSIS] AT SER-166 AND THR-609</scope>
    <scope>IDENTIFICATION BY MASS SPECTROMETRY [LARGE SCALE ANALYSIS]</scope>
</reference>
<reference key="6">
    <citation type="journal article" date="2009" name="Mol. Cell. Proteomics">
        <title>Large scale localization of protein phosphorylation by use of electron capture dissociation mass spectrometry.</title>
        <authorList>
            <person name="Sweet S.M."/>
            <person name="Bailey C.M."/>
            <person name="Cunningham D.L."/>
            <person name="Heath J.K."/>
            <person name="Cooper H.J."/>
        </authorList>
    </citation>
    <scope>PHOSPHORYLATION [LARGE SCALE ANALYSIS] AT SER-808 AND SER-1217</scope>
    <scope>IDENTIFICATION BY MASS SPECTROMETRY [LARGE SCALE ANALYSIS]</scope>
    <source>
        <tissue>Embryonic fibroblast</tissue>
    </source>
</reference>
<reference key="7">
    <citation type="journal article" date="2010" name="Cell">
        <title>A tissue-specific atlas of mouse protein phosphorylation and expression.</title>
        <authorList>
            <person name="Huttlin E.L."/>
            <person name="Jedrychowski M.P."/>
            <person name="Elias J.E."/>
            <person name="Goswami T."/>
            <person name="Rad R."/>
            <person name="Beausoleil S.A."/>
            <person name="Villen J."/>
            <person name="Haas W."/>
            <person name="Sowa M.E."/>
            <person name="Gygi S.P."/>
        </authorList>
    </citation>
    <scope>PHOSPHORYLATION [LARGE SCALE ANALYSIS] AT SER-18; SER-166; SER-378; SER-454; SER-761; THR-807; SER-1087; SER-1090; SER-1217; SER-1302; SER-1306; THR-1319 AND SER-1321</scope>
    <scope>IDENTIFICATION BY MASS SPECTROMETRY [LARGE SCALE ANALYSIS]</scope>
    <source>
        <tissue>Brain</tissue>
        <tissue>Brown adipose tissue</tissue>
        <tissue>Heart</tissue>
        <tissue>Kidney</tissue>
        <tissue>Liver</tissue>
        <tissue>Lung</tissue>
        <tissue>Pancreas</tissue>
        <tissue>Spleen</tissue>
        <tissue>Testis</tissue>
    </source>
</reference>
<reference key="8">
    <citation type="journal article" date="2013" name="Mol. Cell">
        <title>SIRT5-mediated lysine desuccinylation impacts diverse metabolic pathways.</title>
        <authorList>
            <person name="Park J."/>
            <person name="Chen Y."/>
            <person name="Tishkoff D.X."/>
            <person name="Peng C."/>
            <person name="Tan M."/>
            <person name="Dai L."/>
            <person name="Xie Z."/>
            <person name="Zhang Y."/>
            <person name="Zwaans B.M."/>
            <person name="Skinner M.E."/>
            <person name="Lombard D.B."/>
            <person name="Zhao Y."/>
        </authorList>
    </citation>
    <scope>ACETYLATION [LARGE SCALE ANALYSIS] AT LYS-35</scope>
    <scope>IDENTIFICATION BY MASS SPECTROMETRY [LARGE SCALE ANALYSIS]</scope>
    <source>
        <tissue>Embryonic fibroblast</tissue>
    </source>
</reference>
<reference key="9">
    <citation type="journal article" date="2014" name="Mol. Cell. Proteomics">
        <title>Immunoaffinity enrichment and mass spectrometry analysis of protein methylation.</title>
        <authorList>
            <person name="Guo A."/>
            <person name="Gu H."/>
            <person name="Zhou J."/>
            <person name="Mulhern D."/>
            <person name="Wang Y."/>
            <person name="Lee K.A."/>
            <person name="Yang V."/>
            <person name="Aguiar M."/>
            <person name="Kornhauser J."/>
            <person name="Jia X."/>
            <person name="Ren J."/>
            <person name="Beausoleil S.A."/>
            <person name="Silva J.C."/>
            <person name="Vemulapalli V."/>
            <person name="Bedford M.T."/>
            <person name="Comb M.J."/>
        </authorList>
    </citation>
    <scope>METHYLATION [LARGE SCALE ANALYSIS] AT ARG-907 AND ARG-1064</scope>
    <scope>IDENTIFICATION BY MASS SPECTROMETRY [LARGE SCALE ANALYSIS]</scope>
    <source>
        <tissue>Brain</tissue>
        <tissue>Embryo</tissue>
    </source>
</reference>
<name>PRC2A_MOUSE</name>
<feature type="chain" id="PRO_0000064831" description="Protein PRRC2A">
    <location>
        <begin position="1"/>
        <end position="2158"/>
    </location>
</feature>
<feature type="repeat" description="1-1">
    <location>
        <begin position="41"/>
        <end position="95"/>
    </location>
</feature>
<feature type="repeat" description="1-2">
    <location>
        <begin position="98"/>
        <end position="154"/>
    </location>
</feature>
<feature type="repeat" description="1-3">
    <location>
        <begin position="281"/>
        <end position="336"/>
    </location>
</feature>
<feature type="repeat" description="2-1">
    <location>
        <begin position="337"/>
        <end position="428"/>
    </location>
</feature>
<feature type="repeat" description="2-2">
    <location>
        <begin position="486"/>
        <end position="559"/>
    </location>
</feature>
<feature type="repeat" description="1-4">
    <location>
        <begin position="1756"/>
        <end position="1811"/>
    </location>
</feature>
<feature type="repeat" description="3-1">
    <location>
        <begin position="1917"/>
        <end position="1966"/>
    </location>
</feature>
<feature type="repeat" description="3-2">
    <location>
        <begin position="1983"/>
        <end position="2032"/>
    </location>
</feature>
<feature type="repeat" description="3-3">
    <location>
        <begin position="2058"/>
        <end position="2107"/>
    </location>
</feature>
<feature type="region of interest" description="Disordered" evidence="4">
    <location>
        <begin position="1"/>
        <end position="20"/>
    </location>
</feature>
<feature type="region of interest" description="4 X 57 AA type A repeats">
    <location>
        <begin position="41"/>
        <end position="1811"/>
    </location>
</feature>
<feature type="region of interest" description="Disordered" evidence="4">
    <location>
        <begin position="49"/>
        <end position="714"/>
    </location>
</feature>
<feature type="region of interest" description="2 X type B repeats">
    <location>
        <begin position="337"/>
        <end position="559"/>
    </location>
</feature>
<feature type="region of interest" description="Disordered" evidence="4">
    <location>
        <begin position="737"/>
        <end position="1769"/>
    </location>
</feature>
<feature type="region of interest" description="Disordered" evidence="4">
    <location>
        <begin position="1802"/>
        <end position="1883"/>
    </location>
</feature>
<feature type="region of interest" description="3 X 50 AA type C repeats">
    <location>
        <begin position="1917"/>
        <end position="2107"/>
    </location>
</feature>
<feature type="region of interest" description="Disordered" evidence="4">
    <location>
        <begin position="1945"/>
        <end position="1975"/>
    </location>
</feature>
<feature type="region of interest" description="Disordered" evidence="4">
    <location>
        <begin position="1996"/>
        <end position="2158"/>
    </location>
</feature>
<feature type="compositionally biased region" description="Polar residues" evidence="4">
    <location>
        <begin position="98"/>
        <end position="122"/>
    </location>
</feature>
<feature type="compositionally biased region" description="Basic and acidic residues" evidence="4">
    <location>
        <begin position="178"/>
        <end position="189"/>
    </location>
</feature>
<feature type="compositionally biased region" description="Polar residues" evidence="4">
    <location>
        <begin position="190"/>
        <end position="207"/>
    </location>
</feature>
<feature type="compositionally biased region" description="Basic and acidic residues" evidence="4">
    <location>
        <begin position="210"/>
        <end position="232"/>
    </location>
</feature>
<feature type="compositionally biased region" description="Pro residues" evidence="4">
    <location>
        <begin position="253"/>
        <end position="267"/>
    </location>
</feature>
<feature type="compositionally biased region" description="Basic and acidic residues" evidence="4">
    <location>
        <begin position="306"/>
        <end position="316"/>
    </location>
</feature>
<feature type="compositionally biased region" description="Basic and acidic residues" evidence="4">
    <location>
        <begin position="329"/>
        <end position="342"/>
    </location>
</feature>
<feature type="compositionally biased region" description="Acidic residues" evidence="4">
    <location>
        <begin position="343"/>
        <end position="354"/>
    </location>
</feature>
<feature type="compositionally biased region" description="Pro residues" evidence="4">
    <location>
        <begin position="401"/>
        <end position="415"/>
    </location>
</feature>
<feature type="compositionally biased region" description="Basic and acidic residues" evidence="4">
    <location>
        <begin position="468"/>
        <end position="504"/>
    </location>
</feature>
<feature type="compositionally biased region" description="Pro residues" evidence="4">
    <location>
        <begin position="507"/>
        <end position="522"/>
    </location>
</feature>
<feature type="compositionally biased region" description="Pro residues" evidence="4">
    <location>
        <begin position="530"/>
        <end position="539"/>
    </location>
</feature>
<feature type="compositionally biased region" description="Low complexity" evidence="4">
    <location>
        <begin position="547"/>
        <end position="566"/>
    </location>
</feature>
<feature type="compositionally biased region" description="Polar residues" evidence="4">
    <location>
        <begin position="574"/>
        <end position="583"/>
    </location>
</feature>
<feature type="compositionally biased region" description="Pro residues" evidence="4">
    <location>
        <begin position="603"/>
        <end position="614"/>
    </location>
</feature>
<feature type="compositionally biased region" description="Low complexity" evidence="4">
    <location>
        <begin position="643"/>
        <end position="672"/>
    </location>
</feature>
<feature type="compositionally biased region" description="Pro residues" evidence="4">
    <location>
        <begin position="673"/>
        <end position="684"/>
    </location>
</feature>
<feature type="compositionally biased region" description="Pro residues" evidence="4">
    <location>
        <begin position="693"/>
        <end position="702"/>
    </location>
</feature>
<feature type="compositionally biased region" description="Basic and acidic residues" evidence="4">
    <location>
        <begin position="768"/>
        <end position="781"/>
    </location>
</feature>
<feature type="compositionally biased region" description="Pro residues" evidence="4">
    <location>
        <begin position="861"/>
        <end position="871"/>
    </location>
</feature>
<feature type="compositionally biased region" description="Basic and acidic residues" evidence="4">
    <location>
        <begin position="884"/>
        <end position="893"/>
    </location>
</feature>
<feature type="compositionally biased region" description="Basic and acidic residues" evidence="4">
    <location>
        <begin position="915"/>
        <end position="925"/>
    </location>
</feature>
<feature type="compositionally biased region" description="Basic and acidic residues" evidence="4">
    <location>
        <begin position="973"/>
        <end position="984"/>
    </location>
</feature>
<feature type="compositionally biased region" description="Basic and acidic residues" evidence="4">
    <location>
        <begin position="1048"/>
        <end position="1064"/>
    </location>
</feature>
<feature type="compositionally biased region" description="Basic and acidic residues" evidence="4">
    <location>
        <begin position="1108"/>
        <end position="1124"/>
    </location>
</feature>
<feature type="compositionally biased region" description="Pro residues" evidence="4">
    <location>
        <begin position="1135"/>
        <end position="1147"/>
    </location>
</feature>
<feature type="compositionally biased region" description="Pro residues" evidence="4">
    <location>
        <begin position="1193"/>
        <end position="1204"/>
    </location>
</feature>
<feature type="compositionally biased region" description="Basic and acidic residues" evidence="4">
    <location>
        <begin position="1327"/>
        <end position="1336"/>
    </location>
</feature>
<feature type="compositionally biased region" description="Basic and acidic residues" evidence="4">
    <location>
        <begin position="1369"/>
        <end position="1378"/>
    </location>
</feature>
<feature type="compositionally biased region" description="Gly residues" evidence="4">
    <location>
        <begin position="1396"/>
        <end position="1422"/>
    </location>
</feature>
<feature type="compositionally biased region" description="Pro residues" evidence="4">
    <location>
        <begin position="1444"/>
        <end position="1454"/>
    </location>
</feature>
<feature type="compositionally biased region" description="Polar residues" evidence="4">
    <location>
        <begin position="1475"/>
        <end position="1486"/>
    </location>
</feature>
<feature type="compositionally biased region" description="Pro residues" evidence="4">
    <location>
        <begin position="1496"/>
        <end position="1514"/>
    </location>
</feature>
<feature type="compositionally biased region" description="Polar residues" evidence="4">
    <location>
        <begin position="1611"/>
        <end position="1621"/>
    </location>
</feature>
<feature type="compositionally biased region" description="Polar residues" evidence="4">
    <location>
        <begin position="1641"/>
        <end position="1667"/>
    </location>
</feature>
<feature type="compositionally biased region" description="Low complexity" evidence="4">
    <location>
        <begin position="1693"/>
        <end position="1702"/>
    </location>
</feature>
<feature type="compositionally biased region" description="Basic and acidic residues" evidence="4">
    <location>
        <begin position="1704"/>
        <end position="1723"/>
    </location>
</feature>
<feature type="compositionally biased region" description="Polar residues" evidence="4">
    <location>
        <begin position="1803"/>
        <end position="1817"/>
    </location>
</feature>
<feature type="compositionally biased region" description="Pro residues" evidence="4">
    <location>
        <begin position="1998"/>
        <end position="2009"/>
    </location>
</feature>
<feature type="compositionally biased region" description="Low complexity" evidence="4">
    <location>
        <begin position="2010"/>
        <end position="2024"/>
    </location>
</feature>
<feature type="compositionally biased region" description="Basic and acidic residues" evidence="4">
    <location>
        <begin position="2049"/>
        <end position="2064"/>
    </location>
</feature>
<feature type="compositionally biased region" description="Low complexity" evidence="4">
    <location>
        <begin position="2074"/>
        <end position="2086"/>
    </location>
</feature>
<feature type="compositionally biased region" description="Basic and acidic residues" evidence="4">
    <location>
        <begin position="2136"/>
        <end position="2152"/>
    </location>
</feature>
<feature type="modified residue" description="Phosphoserine" evidence="9">
    <location>
        <position position="18"/>
    </location>
</feature>
<feature type="modified residue" description="Phosphoserine" evidence="2">
    <location>
        <position position="19"/>
    </location>
</feature>
<feature type="modified residue" description="N6-acetyllysine" evidence="2">
    <location>
        <position position="27"/>
    </location>
</feature>
<feature type="modified residue" description="Phosphoserine" evidence="2">
    <location>
        <position position="30"/>
    </location>
</feature>
<feature type="modified residue" description="N6-acetyllysine" evidence="10">
    <location>
        <position position="35"/>
    </location>
</feature>
<feature type="modified residue" description="Phosphoserine" evidence="2">
    <location>
        <position position="146"/>
    </location>
</feature>
<feature type="modified residue" description="Phosphoserine" evidence="8 9">
    <location>
        <position position="166"/>
    </location>
</feature>
<feature type="modified residue" description="Phosphoserine" evidence="2">
    <location>
        <position position="204"/>
    </location>
</feature>
<feature type="modified residue" description="Asymmetric dimethylarginine" evidence="2">
    <location>
        <position position="272"/>
    </location>
</feature>
<feature type="modified residue" description="Omega-N-methylarginine" evidence="2">
    <location>
        <position position="296"/>
    </location>
</feature>
<feature type="modified residue" description="Phosphoserine" evidence="2">
    <location>
        <position position="342"/>
    </location>
</feature>
<feature type="modified residue" description="Phosphoserine" evidence="2">
    <location>
        <position position="350"/>
    </location>
</feature>
<feature type="modified residue" description="Phosphoserine" evidence="2">
    <location>
        <position position="363"/>
    </location>
</feature>
<feature type="modified residue" description="Phosphoserine" evidence="9">
    <location>
        <position position="378"/>
    </location>
</feature>
<feature type="modified residue" description="Phosphoserine" evidence="2">
    <location>
        <position position="381"/>
    </location>
</feature>
<feature type="modified residue" description="Phosphoserine" evidence="9">
    <location>
        <position position="454"/>
    </location>
</feature>
<feature type="modified residue" description="Phosphothreonine" evidence="8">
    <location>
        <position position="609"/>
    </location>
</feature>
<feature type="modified residue" description="Phosphoserine" evidence="2">
    <location>
        <position position="759"/>
    </location>
</feature>
<feature type="modified residue" description="Phosphoserine" evidence="9">
    <location>
        <position position="761"/>
    </location>
</feature>
<feature type="modified residue" description="Phosphoserine" evidence="2">
    <location>
        <position position="764"/>
    </location>
</feature>
<feature type="modified residue" description="Phosphothreonine" evidence="9">
    <location>
        <position position="807"/>
    </location>
</feature>
<feature type="modified residue" description="Phosphoserine" evidence="7">
    <location>
        <position position="808"/>
    </location>
</feature>
<feature type="modified residue" description="Omega-N-methylarginine" evidence="11">
    <location>
        <position position="907"/>
    </location>
</feature>
<feature type="modified residue" description="Phosphoserine" evidence="2">
    <location>
        <position position="931"/>
    </location>
</feature>
<feature type="modified residue" description="Phosphothreonine" evidence="6">
    <location>
        <position position="995"/>
    </location>
</feature>
<feature type="modified residue" description="Phosphoserine" evidence="2">
    <location>
        <position position="1002"/>
    </location>
</feature>
<feature type="modified residue" description="Omega-N-methylarginine" evidence="11">
    <location>
        <position position="1064"/>
    </location>
</feature>
<feature type="modified residue" description="Phosphothreonine" evidence="2">
    <location>
        <position position="1081"/>
    </location>
</feature>
<feature type="modified residue" description="Phosphoserine" evidence="2">
    <location>
        <position position="1083"/>
    </location>
</feature>
<feature type="modified residue" description="Phosphoserine" evidence="6 9">
    <location>
        <position position="1087"/>
    </location>
</feature>
<feature type="modified residue" description="Phosphoserine" evidence="6 9">
    <location>
        <position position="1090"/>
    </location>
</feature>
<feature type="modified residue" description="Phosphotyrosine" evidence="2">
    <location>
        <position position="1092"/>
    </location>
</feature>
<feature type="modified residue" description="Phosphoserine" evidence="2">
    <location>
        <position position="1104"/>
    </location>
</feature>
<feature type="modified residue" description="Phosphoserine" evidence="2">
    <location>
        <position position="1108"/>
    </location>
</feature>
<feature type="modified residue" description="Phosphoserine" evidence="2">
    <location>
        <position position="1118"/>
    </location>
</feature>
<feature type="modified residue" description="Phosphoserine" evidence="2">
    <location>
        <position position="1145"/>
    </location>
</feature>
<feature type="modified residue" description="N6-acetyllysine" evidence="2">
    <location>
        <position position="1194"/>
    </location>
</feature>
<feature type="modified residue" description="Phosphoserine" evidence="7 9">
    <location>
        <position position="1217"/>
    </location>
</feature>
<feature type="modified residue" description="Phosphoserine" evidence="9">
    <location>
        <position position="1302"/>
    </location>
</feature>
<feature type="modified residue" description="Phosphoserine" evidence="9">
    <location>
        <position position="1306"/>
    </location>
</feature>
<feature type="modified residue" description="Phosphothreonine" evidence="9">
    <location>
        <position position="1319"/>
    </location>
</feature>
<feature type="modified residue" description="Phosphoserine" evidence="9">
    <location>
        <position position="1321"/>
    </location>
</feature>
<feature type="modified residue" description="Phosphoserine" evidence="2">
    <location>
        <position position="1324"/>
    </location>
</feature>
<feature type="modified residue" description="Phosphothreonine" evidence="2">
    <location>
        <position position="1343"/>
    </location>
</feature>
<feature type="modified residue" description="Phosphothreonine" evidence="2">
    <location>
        <position position="1349"/>
    </location>
</feature>
<feature type="modified residue" description="Phosphoserine" evidence="2">
    <location>
        <position position="1380"/>
    </location>
</feature>
<feature type="modified residue" description="Phosphoserine" evidence="2">
    <location>
        <position position="1382"/>
    </location>
</feature>
<feature type="modified residue" description="Phosphothreonine" evidence="3">
    <location>
        <position position="1401"/>
    </location>
</feature>
<feature type="modified residue" description="Phosphoserine" evidence="2">
    <location>
        <position position="1521"/>
    </location>
</feature>
<feature type="modified residue" description="Phosphoserine" evidence="3">
    <location>
        <position position="1757"/>
    </location>
</feature>
<feature type="modified residue" description="Phosphoserine" evidence="2">
    <location>
        <position position="2037"/>
    </location>
</feature>
<feature type="modified residue" description="Phosphothreonine" evidence="2">
    <location>
        <position position="2077"/>
    </location>
</feature>
<feature type="modified residue" description="Phosphoserine" evidence="2">
    <location>
        <position position="2114"/>
    </location>
</feature>
<feature type="sequence conflict" description="In Ref. 1; AAC82480." evidence="5" ref="1">
    <location>
        <position position="1846"/>
    </location>
</feature>
<keyword id="KW-0007">Acetylation</keyword>
<keyword id="KW-0963">Cytoplasm</keyword>
<keyword id="KW-0903">Direct protein sequencing</keyword>
<keyword id="KW-0488">Methylation</keyword>
<keyword id="KW-0539">Nucleus</keyword>
<keyword id="KW-0597">Phosphoprotein</keyword>
<keyword id="KW-1185">Reference proteome</keyword>
<keyword id="KW-0677">Repeat</keyword>
<proteinExistence type="evidence at protein level"/>
<comment type="function">
    <text evidence="1">May play a role in the regulation of pre-mRNA splicing.</text>
</comment>
<comment type="subcellular location">
    <subcellularLocation>
        <location evidence="1">Cytoplasm</location>
    </subcellularLocation>
    <subcellularLocation>
        <location evidence="1">Nucleus</location>
    </subcellularLocation>
</comment>
<accession>Q7TSC1</accession>
<accession>Q923A9</accession>
<accession>Q9Z1R1</accession>
<sequence length="2158" mass="229203">MSDRSGPTAKGKDGKKYSSLNLFDTYKGKSLEIQKPAVAPRHGLQSLGKVAIARRMPPPANLPSLKAENKGNDPNVSLVPKDGTGWASKQEQSDPKSSDASTAQPPESQPLPASQTPASNQPKRPPTAPENTPSVPSGVKSWAQASVTHGAHGDGGRASNLLSRFSREEFPTLQAAGDQDKAAKERESAEQSSGPGPSLRPQNSTTWRDGGGRGPDDLEGPDSKLHHGHDPRGGLQPSGPPQFPPYRGMMPPFMYPPYLPFPPPYGPQGPYRYPTPDGPSRFPRVAGPRGSGPPMRLVEPVGRPSILKEDNLKEFDQLDQENDDGWAGAHEEVDYTEKLKFSDEEDGRDSDEEGAEGHKDSQSAAAEEPETDGKKGTSPGSELPPPKTAWTENARPSETEPAPPTPKPPPPPPHRGPVGNWGPPGDYPDRGGPPCKPPAPEDEDEAWRQRRKQSSSEISLAVERARRRREEEERRMQEERRAACAEKLKRLDEKFGAPDKRLKAEPAAPPVTPAAPALPPVVPKEIPAAPALPPTPTPTPEKEPEEPAQAPPVQAAPSPGVAPVPTLVSGGGCTANSNSSGSFEASPVEPQLPSKEGPEPPEEVPPPTTPPAPKMEPKGDGVGSTRQPPSQGLGYPKYQKSLPPRFQRQQQEQLLKQQQQQQQWQQQQQGTAPPAPVPPSPPQPVTLGAVPAPQAPPPPPKALYPGALGRPPPMPPMNFDPRWMMIPPYVDPRLLQGRPPLDFYPPGVHPSGLVPRERSDSGGSSSEPFERHAPPLLRERGTPPVDPKLAWVGDVFTTTPTDPRPLTSPLRQAADEEEKSMRSETPPVPPPPPYLANYPGFPENGTPGPPISRFPLEESAPPGPRPLPWPPGNDEAAKMQAPPPKKEPSKEEPPQLSGPEAGRKPARGGQGPPPPRRENRTETRWGPRPGSCRRGIPPEEPGVPPRRAGPIKKPPPPVKVEELPPKSLEQGDETPKVPKPDALKTAKGKVGPKETPPGGNLSPAPRLRRDYSYERVGPTSCRGRGRGEYFARGRGFRGTYGGRGRGARSREFRSYREFRGDDGRGGGSGGTNHPSAPRGRTASETRSEGSEYEEIPKRRRQRGSETGSETHESDLAPSDKEAPPPKEGVLGQVPLAPPQPGAPPSPAPARFSTARGGRVFTPRGVPSRRGRGGGRPPPVCSGWSPPAKSLVPKKPPTGPLPPSKEPLKEKLISGPLSPMSRAGNMGVGMEDGERPRRRRHGRAQQQDKPPRFRRLKQERENAARGADGKPPSLTLAASTPGPEETLTAATVPPPPRRTAAKSPDLSNQNSDQANEEWETASESSDFASERRGDKETPPAALMTSKAVGTPGANAGGAGPGISAMSRGDLSQRAKDLSKRSFSSQRPGMDRQNRRPGTGGKTGSGGGSSGGGGAGPGGRTGPGRGDKRSWPSPKNRSRPPEERPPGLPLPPPPPSSSAVFRLDQVIHSNPAGIQQALAQLSSRQGNVTAPGGHPRPKPGPPQAPQGSSPRPPTRYDPPRASSAISSDPHFEEPGPMVRGVGGTPRDSAGVNPFPPKRRERPPRKPELLQEETVPASHSSGFLGSKPEVPGPQEESRDSGTEALTPHIWNRLHTATSRKSYQPGSIEPWMEPLSPFEDVAGTEMSQSDSGVDLSGDSQVSSGPCSQRSSPDGGLKGSAEGPPKRPGGPSPLNAVPGESASGSEPSEPPRRRPPASHEGERKELPREQPLPPGPIGTERSQRTDRGPEPGPLRPAHRPGSQVEFGTTNKDSDLCLVVGDTLKGEKELVASATEAVPISRDWELLPSASTSAEPQPKSLGSGQCVPEPSPSGQRPYPEVFYGSPGPPNSQQVSGGAPIDSQLHPNSGGFRPGTPSLHQYRSQPLYLPPGPAPPSALLSGVALKGQFLDFSALQATELGKLPAGGVLYPPPSFLYSAAFCPSPLPDPPLLQVRQDLPSPSDFYSTPLQPGGQSGFLPSGAPAQQMLLPVVDSQLPVVNFGSLPPAPPPAPPPLSLLPVGPALQPPNLAVRPPPAPAARVLPSPARPFAPSLGRAELHPVELKPFQDYRKLSSNLGGPGSSRTPPSGRPFSGLNSRLKAPPSTYSGVFRTQRIDLYQQASPPDALRWMPKPWERAGPPSREGPPRRAEEPGSRGEKEPGLPPPR</sequence>
<dbReference type="EMBL" id="AF109719">
    <property type="protein sequence ID" value="AAC82480.1"/>
    <property type="molecule type" value="Genomic_DNA"/>
</dbReference>
<dbReference type="EMBL" id="BC006664">
    <property type="protein sequence ID" value="AAH06664.1"/>
    <property type="molecule type" value="mRNA"/>
</dbReference>
<dbReference type="EMBL" id="BC053522">
    <property type="protein sequence ID" value="AAH53522.1"/>
    <property type="molecule type" value="mRNA"/>
</dbReference>
<dbReference type="CCDS" id="CCDS37596.1"/>
<dbReference type="RefSeq" id="NP_001185973.1">
    <property type="nucleotide sequence ID" value="NM_001199044.1"/>
</dbReference>
<dbReference type="RefSeq" id="NP_064411.2">
    <property type="nucleotide sequence ID" value="NM_020027.3"/>
</dbReference>
<dbReference type="RefSeq" id="XP_006524683.1">
    <property type="nucleotide sequence ID" value="XM_006524620.5"/>
</dbReference>
<dbReference type="SMR" id="Q7TSC1"/>
<dbReference type="BioGRID" id="207439">
    <property type="interactions" value="34"/>
</dbReference>
<dbReference type="DIP" id="DIP-49629N"/>
<dbReference type="FunCoup" id="Q7TSC1">
    <property type="interactions" value="3066"/>
</dbReference>
<dbReference type="IntAct" id="Q7TSC1">
    <property type="interactions" value="8"/>
</dbReference>
<dbReference type="MINT" id="Q7TSC1"/>
<dbReference type="STRING" id="10090.ENSMUSP00000025253"/>
<dbReference type="GlyGen" id="Q7TSC1">
    <property type="glycosylation" value="13 sites, 1 O-linked glycan (6 sites)"/>
</dbReference>
<dbReference type="iPTMnet" id="Q7TSC1"/>
<dbReference type="PhosphoSitePlus" id="Q7TSC1"/>
<dbReference type="SwissPalm" id="Q7TSC1"/>
<dbReference type="jPOST" id="Q7TSC1"/>
<dbReference type="PaxDb" id="10090-ENSMUSP00000025253"/>
<dbReference type="PeptideAtlas" id="Q7TSC1"/>
<dbReference type="ProteomicsDB" id="291551"/>
<dbReference type="Pumba" id="Q7TSC1"/>
<dbReference type="Antibodypedia" id="62364">
    <property type="antibodies" value="14 antibodies from 7 providers"/>
</dbReference>
<dbReference type="DNASU" id="53761"/>
<dbReference type="Ensembl" id="ENSMUST00000025253.12">
    <property type="protein sequence ID" value="ENSMUSP00000025253.6"/>
    <property type="gene ID" value="ENSMUSG00000024393.15"/>
</dbReference>
<dbReference type="GeneID" id="53761"/>
<dbReference type="KEGG" id="mmu:53761"/>
<dbReference type="UCSC" id="uc008cgj.2">
    <property type="organism name" value="mouse"/>
</dbReference>
<dbReference type="AGR" id="MGI:1915467"/>
<dbReference type="CTD" id="7916"/>
<dbReference type="MGI" id="MGI:1915467">
    <property type="gene designation" value="Prrc2a"/>
</dbReference>
<dbReference type="VEuPathDB" id="HostDB:ENSMUSG00000024393"/>
<dbReference type="eggNOG" id="KOG4817">
    <property type="taxonomic scope" value="Eukaryota"/>
</dbReference>
<dbReference type="GeneTree" id="ENSGT00950000183161"/>
<dbReference type="HOGENOM" id="CLU_001247_1_0_1"/>
<dbReference type="InParanoid" id="Q7TSC1"/>
<dbReference type="OMA" id="TPHIWNH"/>
<dbReference type="OrthoDB" id="1939715at2759"/>
<dbReference type="PhylomeDB" id="Q7TSC1"/>
<dbReference type="TreeFam" id="TF328738"/>
<dbReference type="BioGRID-ORCS" id="53761">
    <property type="hits" value="15 hits in 79 CRISPR screens"/>
</dbReference>
<dbReference type="CD-CODE" id="CE726F99">
    <property type="entry name" value="Postsynaptic density"/>
</dbReference>
<dbReference type="ChiTaRS" id="Prrc2a">
    <property type="organism name" value="mouse"/>
</dbReference>
<dbReference type="PRO" id="PR:Q7TSC1"/>
<dbReference type="Proteomes" id="UP000000589">
    <property type="component" value="Chromosome 17"/>
</dbReference>
<dbReference type="RNAct" id="Q7TSC1">
    <property type="molecule type" value="protein"/>
</dbReference>
<dbReference type="Bgee" id="ENSMUSG00000024393">
    <property type="expression patterns" value="Expressed in embryonic post-anal tail and 246 other cell types or tissues"/>
</dbReference>
<dbReference type="ExpressionAtlas" id="Q7TSC1">
    <property type="expression patterns" value="baseline and differential"/>
</dbReference>
<dbReference type="GO" id="GO:0005829">
    <property type="term" value="C:cytosol"/>
    <property type="evidence" value="ECO:0007669"/>
    <property type="project" value="Ensembl"/>
</dbReference>
<dbReference type="GO" id="GO:0005654">
    <property type="term" value="C:nucleoplasm"/>
    <property type="evidence" value="ECO:0007669"/>
    <property type="project" value="Ensembl"/>
</dbReference>
<dbReference type="GO" id="GO:0005886">
    <property type="term" value="C:plasma membrane"/>
    <property type="evidence" value="ECO:0007669"/>
    <property type="project" value="Ensembl"/>
</dbReference>
<dbReference type="InterPro" id="IPR009738">
    <property type="entry name" value="BAT2_N"/>
</dbReference>
<dbReference type="InterPro" id="IPR033184">
    <property type="entry name" value="PRRC2"/>
</dbReference>
<dbReference type="PANTHER" id="PTHR14038">
    <property type="entry name" value="BAT2 HLA-B-ASSOCIATED TRANSCRIPT 2"/>
    <property type="match status" value="1"/>
</dbReference>
<dbReference type="PANTHER" id="PTHR14038:SF5">
    <property type="entry name" value="PROTEIN PRRC2A"/>
    <property type="match status" value="1"/>
</dbReference>
<dbReference type="Pfam" id="PF07001">
    <property type="entry name" value="BAT2_N"/>
    <property type="match status" value="1"/>
</dbReference>
<protein>
    <recommendedName>
        <fullName>Protein PRRC2A</fullName>
    </recommendedName>
    <alternativeName>
        <fullName>HLA-B-associated transcript 2</fullName>
    </alternativeName>
    <alternativeName>
        <fullName>Proline-rich and coiled-coil-containing protein 2A</fullName>
    </alternativeName>
</protein>
<evidence type="ECO:0000250" key="1"/>
<evidence type="ECO:0000250" key="2">
    <source>
        <dbReference type="UniProtKB" id="P48634"/>
    </source>
</evidence>
<evidence type="ECO:0000250" key="3">
    <source>
        <dbReference type="UniProtKB" id="Q6MG48"/>
    </source>
</evidence>
<evidence type="ECO:0000256" key="4">
    <source>
        <dbReference type="SAM" id="MobiDB-lite"/>
    </source>
</evidence>
<evidence type="ECO:0000305" key="5"/>
<evidence type="ECO:0007744" key="6">
    <source>
    </source>
</evidence>
<evidence type="ECO:0007744" key="7">
    <source>
    </source>
</evidence>
<evidence type="ECO:0007744" key="8">
    <source>
    </source>
</evidence>
<evidence type="ECO:0007744" key="9">
    <source>
    </source>
</evidence>
<evidence type="ECO:0007744" key="10">
    <source>
    </source>
</evidence>
<evidence type="ECO:0007744" key="11">
    <source>
    </source>
</evidence>